<feature type="chain" id="PRO_1000136645" description="UPF0266 membrane protein YobD">
    <location>
        <begin position="1"/>
        <end position="152"/>
    </location>
</feature>
<feature type="transmembrane region" description="Helical" evidence="1">
    <location>
        <begin position="6"/>
        <end position="26"/>
    </location>
</feature>
<feature type="transmembrane region" description="Helical" evidence="1">
    <location>
        <begin position="45"/>
        <end position="65"/>
    </location>
</feature>
<feature type="transmembrane region" description="Helical" evidence="1">
    <location>
        <begin position="67"/>
        <end position="87"/>
    </location>
</feature>
<proteinExistence type="inferred from homology"/>
<evidence type="ECO:0000255" key="1">
    <source>
        <dbReference type="HAMAP-Rule" id="MF_01071"/>
    </source>
</evidence>
<name>YOBD_SALA4</name>
<sequence length="152" mass="17782">MTITDLVLILFIAALLAYALYDQFIMPRRNGPTLLSIALLRRGRVDSVIFVGLVAILIYNNVTSHGAQMTTWLLSALALMGFYIFWIRTPRIIFKQRGFFFANVWIEYNRIKEMNLSEDGVLVMQLEQRRLLIRVRNINDLEKIYKLLIENQ</sequence>
<gene>
    <name evidence="1" type="primary">yobD</name>
    <name type="ordered locus">SeAg_B1299</name>
</gene>
<keyword id="KW-0997">Cell inner membrane</keyword>
<keyword id="KW-1003">Cell membrane</keyword>
<keyword id="KW-0472">Membrane</keyword>
<keyword id="KW-0812">Transmembrane</keyword>
<keyword id="KW-1133">Transmembrane helix</keyword>
<reference key="1">
    <citation type="journal article" date="2011" name="J. Bacteriol.">
        <title>Comparative genomics of 28 Salmonella enterica isolates: evidence for CRISPR-mediated adaptive sublineage evolution.</title>
        <authorList>
            <person name="Fricke W.F."/>
            <person name="Mammel M.K."/>
            <person name="McDermott P.F."/>
            <person name="Tartera C."/>
            <person name="White D.G."/>
            <person name="Leclerc J.E."/>
            <person name="Ravel J."/>
            <person name="Cebula T.A."/>
        </authorList>
    </citation>
    <scope>NUCLEOTIDE SEQUENCE [LARGE SCALE GENOMIC DNA]</scope>
    <source>
        <strain>SL483</strain>
    </source>
</reference>
<protein>
    <recommendedName>
        <fullName evidence="1">UPF0266 membrane protein YobD</fullName>
    </recommendedName>
</protein>
<accession>B5F3Q9</accession>
<comment type="subcellular location">
    <subcellularLocation>
        <location evidence="1">Cell inner membrane</location>
        <topology evidence="1">Multi-pass membrane protein</topology>
    </subcellularLocation>
</comment>
<comment type="similarity">
    <text evidence="1">Belongs to the UPF0266 family.</text>
</comment>
<dbReference type="EMBL" id="CP001138">
    <property type="protein sequence ID" value="ACH52830.1"/>
    <property type="molecule type" value="Genomic_DNA"/>
</dbReference>
<dbReference type="RefSeq" id="WP_000156286.1">
    <property type="nucleotide sequence ID" value="NC_011149.1"/>
</dbReference>
<dbReference type="KEGG" id="sea:SeAg_B1299"/>
<dbReference type="HOGENOM" id="CLU_133645_0_0_6"/>
<dbReference type="Proteomes" id="UP000008819">
    <property type="component" value="Chromosome"/>
</dbReference>
<dbReference type="GO" id="GO:0005886">
    <property type="term" value="C:plasma membrane"/>
    <property type="evidence" value="ECO:0007669"/>
    <property type="project" value="UniProtKB-SubCell"/>
</dbReference>
<dbReference type="HAMAP" id="MF_01071">
    <property type="entry name" value="UPF0266"/>
    <property type="match status" value="1"/>
</dbReference>
<dbReference type="InterPro" id="IPR009328">
    <property type="entry name" value="DUF986"/>
</dbReference>
<dbReference type="NCBIfam" id="NF002791">
    <property type="entry name" value="PRK02913.1"/>
    <property type="match status" value="1"/>
</dbReference>
<dbReference type="Pfam" id="PF06173">
    <property type="entry name" value="DUF986"/>
    <property type="match status" value="1"/>
</dbReference>
<dbReference type="PIRSF" id="PIRSF020687">
    <property type="entry name" value="UCP020687"/>
    <property type="match status" value="1"/>
</dbReference>
<organism>
    <name type="scientific">Salmonella agona (strain SL483)</name>
    <dbReference type="NCBI Taxonomy" id="454166"/>
    <lineage>
        <taxon>Bacteria</taxon>
        <taxon>Pseudomonadati</taxon>
        <taxon>Pseudomonadota</taxon>
        <taxon>Gammaproteobacteria</taxon>
        <taxon>Enterobacterales</taxon>
        <taxon>Enterobacteriaceae</taxon>
        <taxon>Salmonella</taxon>
    </lineage>
</organism>